<protein>
    <recommendedName>
        <fullName>WD repeat-containing protein 55 homolog</fullName>
    </recommendedName>
</protein>
<sequence>MHTHNNFKTPSDEDELDDLDEDMVVGVIAEIEQEVLNESDSDNDEYDLVDMGAPVPDNDGDVSYDGNDSISSDDSFDPNAADSDSDDSMLDEAGGGSAGGATSAKKRKDDDNPSGSNKQPEATFDLDEDDETDETVRAMIAAIKKPRSSPPEIKLEDFITDICFHPDRDIIALATIIGDVHLYEYDNEANKLLRTIEVHSKACRDVEFTEDGRFLLTCSKDKCVMVTDMETEKLKKLYETAHDDAINTLHVLNENLFASGDDAGTVKLWDLRTKNAIFELKELEDQITQLTTNEQSKLLLATSADGYLTTFNISARKMYVQSEPYEEELNCMGVYRGDSKLVVGTSKGRLYTYNWGQFGYHCDMYPGIKSPISLMIPITDRIACVAGEDGNIRACHIAPYRNLGVVGQHNMPIESLDVNASGELIASSSHNNDVRFWNVKYFEDFGEIKYNEKHNAYKEQRHNLPSSKCSNTSDFFADLTKEDADGDDDPCAGPSNMS</sequence>
<name>WDR55_DROSI</name>
<feature type="chain" id="PRO_0000373965" description="WD repeat-containing protein 55 homolog">
    <location>
        <begin position="1"/>
        <end position="498"/>
    </location>
</feature>
<feature type="repeat" description="WD 1">
    <location>
        <begin position="154"/>
        <end position="193"/>
    </location>
</feature>
<feature type="repeat" description="WD 2">
    <location>
        <begin position="198"/>
        <end position="237"/>
    </location>
</feature>
<feature type="repeat" description="WD 3">
    <location>
        <begin position="241"/>
        <end position="279"/>
    </location>
</feature>
<feature type="repeat" description="WD 4">
    <location>
        <begin position="282"/>
        <end position="321"/>
    </location>
</feature>
<feature type="repeat" description="WD 5">
    <location>
        <begin position="324"/>
        <end position="363"/>
    </location>
</feature>
<feature type="repeat" description="WD 6">
    <location>
        <begin position="408"/>
        <end position="447"/>
    </location>
</feature>
<feature type="region of interest" description="Disordered" evidence="1">
    <location>
        <begin position="1"/>
        <end position="131"/>
    </location>
</feature>
<feature type="compositionally biased region" description="Acidic residues" evidence="1">
    <location>
        <begin position="12"/>
        <end position="23"/>
    </location>
</feature>
<feature type="compositionally biased region" description="Acidic residues" evidence="1">
    <location>
        <begin position="31"/>
        <end position="48"/>
    </location>
</feature>
<organism>
    <name type="scientific">Drosophila simulans</name>
    <name type="common">Fruit fly</name>
    <dbReference type="NCBI Taxonomy" id="7240"/>
    <lineage>
        <taxon>Eukaryota</taxon>
        <taxon>Metazoa</taxon>
        <taxon>Ecdysozoa</taxon>
        <taxon>Arthropoda</taxon>
        <taxon>Hexapoda</taxon>
        <taxon>Insecta</taxon>
        <taxon>Pterygota</taxon>
        <taxon>Neoptera</taxon>
        <taxon>Endopterygota</taxon>
        <taxon>Diptera</taxon>
        <taxon>Brachycera</taxon>
        <taxon>Muscomorpha</taxon>
        <taxon>Ephydroidea</taxon>
        <taxon>Drosophilidae</taxon>
        <taxon>Drosophila</taxon>
        <taxon>Sophophora</taxon>
    </lineage>
</organism>
<proteinExistence type="inferred from homology"/>
<gene>
    <name type="ORF">GD18783</name>
</gene>
<comment type="similarity">
    <text evidence="2">Belongs to the WD repeat WDR55 family.</text>
</comment>
<accession>B4QTL6</accession>
<evidence type="ECO:0000256" key="1">
    <source>
        <dbReference type="SAM" id="MobiDB-lite"/>
    </source>
</evidence>
<evidence type="ECO:0000305" key="2"/>
<dbReference type="EMBL" id="CM000364">
    <property type="protein sequence ID" value="EDX13321.1"/>
    <property type="molecule type" value="Genomic_DNA"/>
</dbReference>
<dbReference type="SMR" id="B4QTL6"/>
<dbReference type="STRING" id="7240.B4QTL6"/>
<dbReference type="EnsemblMetazoa" id="FBtr0218693">
    <property type="protein sequence ID" value="FBpp0217185"/>
    <property type="gene ID" value="FBgn0190302"/>
</dbReference>
<dbReference type="EnsemblMetazoa" id="XM_002103782.4">
    <property type="protein sequence ID" value="XP_002103818.1"/>
    <property type="gene ID" value="LOC6728473"/>
</dbReference>
<dbReference type="GeneID" id="6728473"/>
<dbReference type="KEGG" id="dsi:Dsimw501_GD18783"/>
<dbReference type="HOGENOM" id="CLU_035848_1_0_1"/>
<dbReference type="OMA" id="QAIHPTE"/>
<dbReference type="OrthoDB" id="2288928at2759"/>
<dbReference type="PhylomeDB" id="B4QTL6"/>
<dbReference type="Proteomes" id="UP000000304">
    <property type="component" value="Chromosome 3R"/>
</dbReference>
<dbReference type="Bgee" id="FBgn0190302">
    <property type="expression patterns" value="Expressed in embryo and 3 other cell types or tissues"/>
</dbReference>
<dbReference type="GO" id="GO:0050829">
    <property type="term" value="P:defense response to Gram-negative bacterium"/>
    <property type="evidence" value="ECO:0007669"/>
    <property type="project" value="EnsemblMetazoa"/>
</dbReference>
<dbReference type="FunFam" id="2.130.10.10:FF:001280">
    <property type="entry name" value="WD repeat-containing protein 55 homolog"/>
    <property type="match status" value="1"/>
</dbReference>
<dbReference type="FunFam" id="2.130.10.10:FF:001796">
    <property type="entry name" value="WD repeat-containing protein 55 homolog"/>
    <property type="match status" value="1"/>
</dbReference>
<dbReference type="Gene3D" id="2.130.10.10">
    <property type="entry name" value="YVTN repeat-like/Quinoprotein amine dehydrogenase"/>
    <property type="match status" value="2"/>
</dbReference>
<dbReference type="InterPro" id="IPR015943">
    <property type="entry name" value="WD40/YVTN_repeat-like_dom_sf"/>
</dbReference>
<dbReference type="InterPro" id="IPR019775">
    <property type="entry name" value="WD40_repeat_CS"/>
</dbReference>
<dbReference type="InterPro" id="IPR036322">
    <property type="entry name" value="WD40_repeat_dom_sf"/>
</dbReference>
<dbReference type="InterPro" id="IPR001680">
    <property type="entry name" value="WD40_rpt"/>
</dbReference>
<dbReference type="InterPro" id="IPR050505">
    <property type="entry name" value="WDR55_POC1"/>
</dbReference>
<dbReference type="PANTHER" id="PTHR44019">
    <property type="entry name" value="WD REPEAT-CONTAINING PROTEIN 55"/>
    <property type="match status" value="1"/>
</dbReference>
<dbReference type="PANTHER" id="PTHR44019:SF20">
    <property type="entry name" value="WD REPEAT-CONTAINING PROTEIN 55"/>
    <property type="match status" value="1"/>
</dbReference>
<dbReference type="Pfam" id="PF24796">
    <property type="entry name" value="WDR55"/>
    <property type="match status" value="1"/>
</dbReference>
<dbReference type="SMART" id="SM00320">
    <property type="entry name" value="WD40"/>
    <property type="match status" value="5"/>
</dbReference>
<dbReference type="SUPFAM" id="SSF50978">
    <property type="entry name" value="WD40 repeat-like"/>
    <property type="match status" value="1"/>
</dbReference>
<dbReference type="PROSITE" id="PS00678">
    <property type="entry name" value="WD_REPEATS_1"/>
    <property type="match status" value="1"/>
</dbReference>
<dbReference type="PROSITE" id="PS50082">
    <property type="entry name" value="WD_REPEATS_2"/>
    <property type="match status" value="3"/>
</dbReference>
<dbReference type="PROSITE" id="PS50294">
    <property type="entry name" value="WD_REPEATS_REGION"/>
    <property type="match status" value="1"/>
</dbReference>
<reference key="1">
    <citation type="journal article" date="2007" name="Nature">
        <title>Evolution of genes and genomes on the Drosophila phylogeny.</title>
        <authorList>
            <consortium name="Drosophila 12 genomes consortium"/>
        </authorList>
    </citation>
    <scope>NUCLEOTIDE SEQUENCE [LARGE SCALE GENOMIC DNA]</scope>
</reference>
<keyword id="KW-1185">Reference proteome</keyword>
<keyword id="KW-0677">Repeat</keyword>
<keyword id="KW-0853">WD repeat</keyword>